<comment type="function">
    <text evidence="2">Oxysterol-binding protein that mediates feedback control of cholesterol synthesis by controlling both endoplasmic reticulum to Golgi transport of SCAP and degradation of HMGCR. Acts as a negative regulator of cholesterol biosynthesis by mediating the retention of the SCAP-SREBP complex in the endoplasmic reticulum, thereby blocking the processing of sterol regulatory element-binding proteins (SREBPs) SREBF1/SREBP1 and SREBF2/SREBP2. Binds oxysterol, including 22-hydroxycholesterol, 24-hydroxycholesterol, 25-hydroxycholesterol and 27-hydroxycholesterol, regulating interaction with SCAP and retention of the SCAP-SREBP complex in the endoplasmic reticulum. In presence of oxysterol, interacts with SCAP, retaining the SCAP-SREBP complex in the endoplasmic reticulum, thereby preventing SCAP from escorting SREBF1/SREBP1 and SREBF2/SREBP2 to the Golgi. Sterol deprivation or phosphorylation by PCK1 reduce oxysterol-binding, disrupting the interaction between INSIG2 and SCAP, thereby promoting Golgi transport of the SCAP-SREBP complex, followed by processing and nuclear translocation of SREBF1/SREBP1 and SREBF2/SREBP2. Also regulates cholesterol synthesis by regulating degradation of HMGCR: initiates the sterol-mediated ubiquitin-mediated endoplasmic reticulum-associated degradation (ERAD) of HMGCR via recruitment of the reductase to the ubiquitin ligase RNF139.</text>
</comment>
<comment type="subunit">
    <text evidence="2">Interacts with SCAP; interaction is direct and only takes place in the presence of sterols; it prevents interaction between SCAP and the coat protein complex II (COPII). Associates with the SCAP-SREBP complex (composed of SCAP and SREBF1/SREBP1 or SREBF2/SREBP2); association is mediated via its interaction with SCAP and only takes place in the presence of sterols. Interacts with RNF139. Interacts with RNF145.</text>
</comment>
<comment type="subcellular location">
    <subcellularLocation>
        <location evidence="2">Endoplasmic reticulum membrane</location>
        <topology evidence="2">Multi-pass membrane protein</topology>
    </subcellularLocation>
</comment>
<comment type="domain">
    <text evidence="2">Binds oxysterols in a pocket within their transmembrane domains and interacts with SCAP via transmembrane domains 3 and 4.</text>
</comment>
<comment type="domain">
    <text evidence="2">The KxHxx motif mediates association with the coatomer complex.</text>
</comment>
<comment type="PTM">
    <text evidence="2">Phosphorylation at Ser-151 by PCK1 reduces binding to oxysterol, disrupting the interaction between INSIG2 and SCAP, thereby promoting nuclear translocation of SREBP proteins (SREBF1/SREBP1 or SREBF2/SREBP2) and subsequent transcription of downstream lipogenesis-related genes.</text>
</comment>
<comment type="PTM">
    <text evidence="2">Polyubiquitinated by AMFR/gp78 at Cys-215 in some tissues such as adipose tissues, undifferentiated myoblasts and liver, leading to its degradation. In differentiated myotubes, Cys-215 oxidation prevents ubiquitination at the same site, resulting in protein stabilization.</text>
</comment>
<comment type="PTM">
    <text evidence="2">Oxidized at Cys-215 in differentiated myotubes, preventing ubiquitination at the same site, and resulting in protein stabilization.</text>
</comment>
<comment type="similarity">
    <text evidence="3">Belongs to the INSIG family.</text>
</comment>
<comment type="sequence caution" evidence="3">
    <conflict type="miscellaneous discrepancy">
        <sequence resource="EMBL-CDS" id="CAH92729"/>
    </conflict>
</comment>
<gene>
    <name evidence="2" type="primary">INSIG2</name>
</gene>
<protein>
    <recommendedName>
        <fullName evidence="2">Insulin-induced gene 2 protein</fullName>
        <shortName evidence="2">INSIG-2</shortName>
    </recommendedName>
</protein>
<proteinExistence type="evidence at transcript level"/>
<evidence type="ECO:0000250" key="1">
    <source>
        <dbReference type="UniProtKB" id="A1T557"/>
    </source>
</evidence>
<evidence type="ECO:0000250" key="2">
    <source>
        <dbReference type="UniProtKB" id="Q9Y5U4"/>
    </source>
</evidence>
<evidence type="ECO:0000305" key="3"/>
<dbReference type="EMBL" id="CR860607">
    <property type="protein sequence ID" value="CAH92729.1"/>
    <property type="status" value="ALT_SEQ"/>
    <property type="molecule type" value="mRNA"/>
</dbReference>
<dbReference type="RefSeq" id="XP_009235931.1">
    <property type="nucleotide sequence ID" value="XM_009237656.1"/>
</dbReference>
<dbReference type="RefSeq" id="XP_024099578.1">
    <property type="nucleotide sequence ID" value="XM_024243810.3"/>
</dbReference>
<dbReference type="RefSeq" id="XP_024099580.1">
    <property type="nucleotide sequence ID" value="XM_024243812.2"/>
</dbReference>
<dbReference type="SMR" id="Q5R687"/>
<dbReference type="FunCoup" id="Q5R687">
    <property type="interactions" value="736"/>
</dbReference>
<dbReference type="STRING" id="9601.ENSPPYP00000014277"/>
<dbReference type="Ensembl" id="ENSPPYT00000045300.1">
    <property type="protein sequence ID" value="ENSPPYP00000027018.1"/>
    <property type="gene ID" value="ENSPPYG00000037275.1"/>
</dbReference>
<dbReference type="GeneID" id="100173587"/>
<dbReference type="eggNOG" id="KOG4363">
    <property type="taxonomic scope" value="Eukaryota"/>
</dbReference>
<dbReference type="GeneTree" id="ENSGT00580000081600"/>
<dbReference type="InParanoid" id="Q5R687"/>
<dbReference type="OMA" id="SKKCGPY"/>
<dbReference type="OrthoDB" id="205546at2759"/>
<dbReference type="Proteomes" id="UP000001595">
    <property type="component" value="Chromosome 2B"/>
</dbReference>
<dbReference type="GO" id="GO:0032937">
    <property type="term" value="C:SREBP-SCAP-Insig complex"/>
    <property type="evidence" value="ECO:0007669"/>
    <property type="project" value="Ensembl"/>
</dbReference>
<dbReference type="GO" id="GO:0008142">
    <property type="term" value="F:oxysterol binding"/>
    <property type="evidence" value="ECO:0000250"/>
    <property type="project" value="UniProtKB"/>
</dbReference>
<dbReference type="GO" id="GO:0140311">
    <property type="term" value="F:protein sequestering activity"/>
    <property type="evidence" value="ECO:0007669"/>
    <property type="project" value="Ensembl"/>
</dbReference>
<dbReference type="GO" id="GO:0032869">
    <property type="term" value="P:cellular response to insulin stimulus"/>
    <property type="evidence" value="ECO:0007669"/>
    <property type="project" value="TreeGrafter"/>
</dbReference>
<dbReference type="GO" id="GO:0006695">
    <property type="term" value="P:cholesterol biosynthetic process"/>
    <property type="evidence" value="ECO:0000250"/>
    <property type="project" value="UniProtKB"/>
</dbReference>
<dbReference type="GO" id="GO:0060363">
    <property type="term" value="P:cranial suture morphogenesis"/>
    <property type="evidence" value="ECO:0007669"/>
    <property type="project" value="Ensembl"/>
</dbReference>
<dbReference type="GO" id="GO:0042472">
    <property type="term" value="P:inner ear morphogenesis"/>
    <property type="evidence" value="ECO:0007669"/>
    <property type="project" value="Ensembl"/>
</dbReference>
<dbReference type="GO" id="GO:0042474">
    <property type="term" value="P:middle ear morphogenesis"/>
    <property type="evidence" value="ECO:0007669"/>
    <property type="project" value="Ensembl"/>
</dbReference>
<dbReference type="GO" id="GO:0045717">
    <property type="term" value="P:negative regulation of fatty acid biosynthetic process"/>
    <property type="evidence" value="ECO:0007669"/>
    <property type="project" value="Ensembl"/>
</dbReference>
<dbReference type="GO" id="GO:0010894">
    <property type="term" value="P:negative regulation of steroid biosynthetic process"/>
    <property type="evidence" value="ECO:0007669"/>
    <property type="project" value="Ensembl"/>
</dbReference>
<dbReference type="GO" id="GO:0060021">
    <property type="term" value="P:roof of mouth development"/>
    <property type="evidence" value="ECO:0007669"/>
    <property type="project" value="Ensembl"/>
</dbReference>
<dbReference type="GO" id="GO:0032933">
    <property type="term" value="P:SREBP signaling pathway"/>
    <property type="evidence" value="ECO:0000250"/>
    <property type="project" value="UniProtKB"/>
</dbReference>
<dbReference type="GO" id="GO:0036316">
    <property type="term" value="P:SREBP-SCAP complex retention in endoplasmic reticulum"/>
    <property type="evidence" value="ECO:0000250"/>
    <property type="project" value="UniProtKB"/>
</dbReference>
<dbReference type="GO" id="GO:0006641">
    <property type="term" value="P:triglyceride metabolic process"/>
    <property type="evidence" value="ECO:0007669"/>
    <property type="project" value="Ensembl"/>
</dbReference>
<dbReference type="InterPro" id="IPR025929">
    <property type="entry name" value="INSIG_fam"/>
</dbReference>
<dbReference type="PANTHER" id="PTHR15301">
    <property type="entry name" value="INSULIN-INDUCED GENE 1"/>
    <property type="match status" value="1"/>
</dbReference>
<dbReference type="PANTHER" id="PTHR15301:SF10">
    <property type="entry name" value="INSULIN-INDUCED GENE 2 PROTEIN"/>
    <property type="match status" value="1"/>
</dbReference>
<dbReference type="Pfam" id="PF07281">
    <property type="entry name" value="INSIG"/>
    <property type="match status" value="1"/>
</dbReference>
<feature type="chain" id="PRO_0000286800" description="Insulin-induced gene 2 protein">
    <location>
        <begin position="1"/>
        <end position="225"/>
    </location>
</feature>
<feature type="topological domain" description="Cytoplasmic" evidence="3">
    <location>
        <begin position="1"/>
        <end position="28"/>
    </location>
</feature>
<feature type="transmembrane region" description="Helical; Name=1" evidence="1">
    <location>
        <begin position="29"/>
        <end position="51"/>
    </location>
</feature>
<feature type="topological domain" description="Lumenal" evidence="3">
    <location>
        <begin position="52"/>
        <end position="70"/>
    </location>
</feature>
<feature type="transmembrane region" description="Helical; Name=2" evidence="1">
    <location>
        <begin position="71"/>
        <end position="88"/>
    </location>
</feature>
<feature type="topological domain" description="Cytoplasmic" evidence="3">
    <location>
        <begin position="89"/>
        <end position="103"/>
    </location>
</feature>
<feature type="transmembrane region" description="Helical; Name=3" evidence="1">
    <location>
        <begin position="104"/>
        <end position="126"/>
    </location>
</feature>
<feature type="topological domain" description="Lumenal" evidence="3">
    <location>
        <begin position="127"/>
        <end position="129"/>
    </location>
</feature>
<feature type="transmembrane region" description="Helical; Name=4" evidence="1">
    <location>
        <begin position="130"/>
        <end position="148"/>
    </location>
</feature>
<feature type="topological domain" description="Cytoplasmic" evidence="3">
    <location>
        <begin position="149"/>
        <end position="153"/>
    </location>
</feature>
<feature type="transmembrane region" description="Helical; Name=5" evidence="1">
    <location>
        <begin position="154"/>
        <end position="175"/>
    </location>
</feature>
<feature type="topological domain" description="Lumenal" evidence="3">
    <location>
        <begin position="176"/>
        <end position="189"/>
    </location>
</feature>
<feature type="transmembrane region" description="Helical; Name=6" evidence="1">
    <location>
        <begin position="190"/>
        <end position="207"/>
    </location>
</feature>
<feature type="topological domain" description="Cytoplasmic" evidence="3">
    <location>
        <begin position="208"/>
        <end position="225"/>
    </location>
</feature>
<feature type="short sequence motif" description="KxHxx" evidence="2">
    <location>
        <begin position="219"/>
        <end position="225"/>
    </location>
</feature>
<feature type="site" description="Required for the recognition of 25-hydroxycholesterol" evidence="2">
    <location>
        <position position="115"/>
    </location>
</feature>
<feature type="modified residue" description="Phosphoserine" evidence="2">
    <location>
        <position position="151"/>
    </location>
</feature>
<feature type="modified residue" description="Cysteine sulfenic acid (-SOH); alternate" evidence="2">
    <location>
        <position position="215"/>
    </location>
</feature>
<feature type="cross-link" description="Glycyl cysteine thioester (Cys-Gly) (interchain with G-Cter in ubiquitin); alternate" evidence="2">
    <location>
        <position position="215"/>
    </location>
</feature>
<sequence>MAEGETKSPGPKKCGPYISSVTSQSVNLMIRGVVLFFIGVFLALVLNLLQIQRNVTLFPPDVIASIFSSAWWVPPCCGTASAVIGLLYPCIDRHLGEPHKFKREWSSVMRCVAVFVGINHASAKVDFDNNIQLSLTLAALSIGLWWTFDRSRSGFGLGVGIAFLATVVTQLLVYNGVYQYTSPDFLYVRSWLPCIFFAGGITMGNIGRQLAMYECKVIAEKSHQE</sequence>
<reference key="1">
    <citation type="submission" date="2004-11" db="EMBL/GenBank/DDBJ databases">
        <authorList>
            <consortium name="The German cDNA consortium"/>
        </authorList>
    </citation>
    <scope>NUCLEOTIDE SEQUENCE [LARGE SCALE MRNA] OF 3-225</scope>
    <source>
        <tissue>Brain cortex</tissue>
    </source>
</reference>
<keyword id="KW-0153">Cholesterol metabolism</keyword>
<keyword id="KW-0256">Endoplasmic reticulum</keyword>
<keyword id="KW-0443">Lipid metabolism</keyword>
<keyword id="KW-0446">Lipid-binding</keyword>
<keyword id="KW-0472">Membrane</keyword>
<keyword id="KW-0558">Oxidation</keyword>
<keyword id="KW-0597">Phosphoprotein</keyword>
<keyword id="KW-1185">Reference proteome</keyword>
<keyword id="KW-0753">Steroid metabolism</keyword>
<keyword id="KW-1207">Sterol metabolism</keyword>
<keyword id="KW-0882">Thioester bond</keyword>
<keyword id="KW-0812">Transmembrane</keyword>
<keyword id="KW-1133">Transmembrane helix</keyword>
<keyword id="KW-0832">Ubl conjugation</keyword>
<accession>Q5R687</accession>
<organism>
    <name type="scientific">Pongo abelii</name>
    <name type="common">Sumatran orangutan</name>
    <name type="synonym">Pongo pygmaeus abelii</name>
    <dbReference type="NCBI Taxonomy" id="9601"/>
    <lineage>
        <taxon>Eukaryota</taxon>
        <taxon>Metazoa</taxon>
        <taxon>Chordata</taxon>
        <taxon>Craniata</taxon>
        <taxon>Vertebrata</taxon>
        <taxon>Euteleostomi</taxon>
        <taxon>Mammalia</taxon>
        <taxon>Eutheria</taxon>
        <taxon>Euarchontoglires</taxon>
        <taxon>Primates</taxon>
        <taxon>Haplorrhini</taxon>
        <taxon>Catarrhini</taxon>
        <taxon>Hominidae</taxon>
        <taxon>Pongo</taxon>
    </lineage>
</organism>
<name>INSI2_PONAB</name>